<proteinExistence type="inferred from homology"/>
<gene>
    <name evidence="1" type="primary">rpl36</name>
    <name type="ordered locus">OtCpg00050</name>
</gene>
<reference key="1">
    <citation type="journal article" date="2007" name="Mol. Biol. Evol.">
        <title>The complete chloroplast and mitochondrial DNA sequence of Ostreococcus tauri: organelle genomes of the smallest eukaryote are examples of compaction.</title>
        <authorList>
            <person name="Robbens S."/>
            <person name="Derelle E."/>
            <person name="Ferraz C."/>
            <person name="Wuyts J."/>
            <person name="Moreau H."/>
            <person name="Van de Peer Y."/>
        </authorList>
    </citation>
    <scope>NUCLEOTIDE SEQUENCE [LARGE SCALE GENOMIC DNA]</scope>
    <source>
        <strain>OTTH0595</strain>
    </source>
</reference>
<keyword id="KW-0150">Chloroplast</keyword>
<keyword id="KW-0934">Plastid</keyword>
<keyword id="KW-1185">Reference proteome</keyword>
<keyword id="KW-0687">Ribonucleoprotein</keyword>
<keyword id="KW-0689">Ribosomal protein</keyword>
<geneLocation type="chloroplast"/>
<organism>
    <name type="scientific">Ostreococcus tauri</name>
    <dbReference type="NCBI Taxonomy" id="70448"/>
    <lineage>
        <taxon>Eukaryota</taxon>
        <taxon>Viridiplantae</taxon>
        <taxon>Chlorophyta</taxon>
        <taxon>Mamiellophyceae</taxon>
        <taxon>Mamiellales</taxon>
        <taxon>Bathycoccaceae</taxon>
        <taxon>Ostreococcus</taxon>
    </lineage>
</organism>
<comment type="subcellular location">
    <subcellularLocation>
        <location>Plastid</location>
        <location>Chloroplast</location>
    </subcellularLocation>
</comment>
<comment type="similarity">
    <text evidence="1">Belongs to the bacterial ribosomal protein bL36 family.</text>
</comment>
<protein>
    <recommendedName>
        <fullName evidence="1">Large ribosomal subunit protein bL36c</fullName>
    </recommendedName>
    <alternativeName>
        <fullName evidence="2">50S ribosomal protein L36, chloroplastic</fullName>
    </alternativeName>
</protein>
<feature type="chain" id="PRO_0000276827" description="Large ribosomal subunit protein bL36c">
    <location>
        <begin position="1"/>
        <end position="37"/>
    </location>
</feature>
<sequence length="37" mass="4319">MKVRASVKKMCPKCRVIRRHGKVMVICSNPKHKQRQG</sequence>
<name>RK36_OSTTA</name>
<evidence type="ECO:0000255" key="1">
    <source>
        <dbReference type="HAMAP-Rule" id="MF_00251"/>
    </source>
</evidence>
<evidence type="ECO:0000305" key="2"/>
<accession>Q0P3P7</accession>
<dbReference type="EMBL" id="CR954199">
    <property type="protein sequence ID" value="CAL36330.1"/>
    <property type="molecule type" value="Genomic_DNA"/>
</dbReference>
<dbReference type="RefSeq" id="YP_717208.1">
    <property type="nucleotide sequence ID" value="NC_008289.1"/>
</dbReference>
<dbReference type="SMR" id="Q0P3P7"/>
<dbReference type="FunCoup" id="Q0P3P7">
    <property type="interactions" value="46"/>
</dbReference>
<dbReference type="STRING" id="70448.Q0P3P7"/>
<dbReference type="GeneID" id="4238795"/>
<dbReference type="KEGG" id="ota:OstapCp05"/>
<dbReference type="eggNOG" id="ENOG502SBPU">
    <property type="taxonomic scope" value="Eukaryota"/>
</dbReference>
<dbReference type="InParanoid" id="Q0P3P7"/>
<dbReference type="Proteomes" id="UP000009170">
    <property type="component" value="Chloroplast"/>
</dbReference>
<dbReference type="GO" id="GO:0009507">
    <property type="term" value="C:chloroplast"/>
    <property type="evidence" value="ECO:0007669"/>
    <property type="project" value="UniProtKB-SubCell"/>
</dbReference>
<dbReference type="GO" id="GO:1990904">
    <property type="term" value="C:ribonucleoprotein complex"/>
    <property type="evidence" value="ECO:0007669"/>
    <property type="project" value="UniProtKB-KW"/>
</dbReference>
<dbReference type="GO" id="GO:0005840">
    <property type="term" value="C:ribosome"/>
    <property type="evidence" value="ECO:0007669"/>
    <property type="project" value="UniProtKB-KW"/>
</dbReference>
<dbReference type="GO" id="GO:0003735">
    <property type="term" value="F:structural constituent of ribosome"/>
    <property type="evidence" value="ECO:0007669"/>
    <property type="project" value="InterPro"/>
</dbReference>
<dbReference type="GO" id="GO:0006412">
    <property type="term" value="P:translation"/>
    <property type="evidence" value="ECO:0007669"/>
    <property type="project" value="UniProtKB-UniRule"/>
</dbReference>
<dbReference type="HAMAP" id="MF_00251">
    <property type="entry name" value="Ribosomal_bL36"/>
    <property type="match status" value="1"/>
</dbReference>
<dbReference type="InterPro" id="IPR000473">
    <property type="entry name" value="Ribosomal_bL36"/>
</dbReference>
<dbReference type="InterPro" id="IPR035977">
    <property type="entry name" value="Ribosomal_bL36_sp"/>
</dbReference>
<dbReference type="NCBIfam" id="TIGR01022">
    <property type="entry name" value="rpmJ_bact"/>
    <property type="match status" value="1"/>
</dbReference>
<dbReference type="PANTHER" id="PTHR42888">
    <property type="entry name" value="50S RIBOSOMAL PROTEIN L36, CHLOROPLASTIC"/>
    <property type="match status" value="1"/>
</dbReference>
<dbReference type="PANTHER" id="PTHR42888:SF1">
    <property type="entry name" value="LARGE RIBOSOMAL SUBUNIT PROTEIN BL36C"/>
    <property type="match status" value="1"/>
</dbReference>
<dbReference type="Pfam" id="PF00444">
    <property type="entry name" value="Ribosomal_L36"/>
    <property type="match status" value="1"/>
</dbReference>
<dbReference type="SUPFAM" id="SSF57840">
    <property type="entry name" value="Ribosomal protein L36"/>
    <property type="match status" value="1"/>
</dbReference>
<dbReference type="PROSITE" id="PS00828">
    <property type="entry name" value="RIBOSOMAL_L36"/>
    <property type="match status" value="1"/>
</dbReference>